<keyword id="KW-0024">Alternative initiation</keyword>
<keyword id="KW-0966">Cell projection</keyword>
<keyword id="KW-0472">Membrane</keyword>
<keyword id="KW-1267">Proteomics identification</keyword>
<keyword id="KW-1185">Reference proteome</keyword>
<keyword id="KW-0812">Transmembrane</keyword>
<keyword id="KW-1133">Transmembrane helix</keyword>
<protein>
    <recommendedName>
        <fullName evidence="3">Transmembrane protein 80</fullName>
    </recommendedName>
</protein>
<comment type="interaction">
    <interactant intactId="EBI-11742770">
        <id>Q96HE8</id>
    </interactant>
    <interactant intactId="EBI-11277970">
        <id>Q9UHX3</id>
        <label>ADGRE2</label>
    </interactant>
    <organismsDiffer>false</organismsDiffer>
    <experiments>3</experiments>
</comment>
<comment type="interaction">
    <interactant intactId="EBI-11742770">
        <id>Q96HE8</id>
    </interactant>
    <interactant intactId="EBI-11957045">
        <id>Q9NVV5-2</id>
        <label>AIG1</label>
    </interactant>
    <organismsDiffer>false</organismsDiffer>
    <experiments>3</experiments>
</comment>
<comment type="interaction">
    <interactant intactId="EBI-11742770">
        <id>Q96HE8</id>
    </interactant>
    <interactant intactId="EBI-745213">
        <id>P29972</id>
        <label>AQP1</label>
    </interactant>
    <organismsDiffer>false</organismsDiffer>
    <experiments>3</experiments>
</comment>
<comment type="interaction">
    <interactant intactId="EBI-11742770">
        <id>Q96HE8</id>
    </interactant>
    <interactant intactId="EBI-2808844">
        <id>Q8N6S5</id>
        <label>ARL6IP6</label>
    </interactant>
    <organismsDiffer>false</organismsDiffer>
    <experiments>3</experiments>
</comment>
<comment type="interaction">
    <interactant intactId="EBI-11742770">
        <id>Q96HE8</id>
    </interactant>
    <interactant intactId="EBI-749204">
        <id>O15155</id>
        <label>BET1</label>
    </interactant>
    <organismsDiffer>false</organismsDiffer>
    <experiments>3</experiments>
</comment>
<comment type="interaction">
    <interactant intactId="EBI-11742770">
        <id>Q96HE8</id>
    </interactant>
    <interactant intactId="EBI-700794">
        <id>Q13323</id>
        <label>BIK</label>
    </interactant>
    <organismsDiffer>false</organismsDiffer>
    <experiments>3</experiments>
</comment>
<comment type="interaction">
    <interactant intactId="EBI-11742770">
        <id>Q96HE8</id>
    </interactant>
    <interactant intactId="EBI-2836238">
        <id>Q96F05</id>
        <label>C11orf24</label>
    </interactant>
    <organismsDiffer>false</organismsDiffer>
    <experiments>3</experiments>
</comment>
<comment type="interaction">
    <interactant intactId="EBI-11742770">
        <id>Q96HE8</id>
    </interactant>
    <interactant intactId="EBI-11986083">
        <id>Q6UWT4</id>
        <label>C5orf46</label>
    </interactant>
    <organismsDiffer>false</organismsDiffer>
    <experiments>3</experiments>
</comment>
<comment type="interaction">
    <interactant intactId="EBI-11742770">
        <id>Q96HE8</id>
    </interactant>
    <interactant intactId="EBI-9083477">
        <id>Q9P0B6</id>
        <label>CCDC167</label>
    </interactant>
    <organismsDiffer>false</organismsDiffer>
    <experiments>3</experiments>
</comment>
<comment type="interaction">
    <interactant intactId="EBI-11742770">
        <id>Q96HE8</id>
    </interactant>
    <interactant intactId="EBI-762053">
        <id>P08962</id>
        <label>CD63</label>
    </interactant>
    <organismsDiffer>false</organismsDiffer>
    <experiments>3</experiments>
</comment>
<comment type="interaction">
    <interactant intactId="EBI-11742770">
        <id>Q96HE8</id>
    </interactant>
    <interactant intactId="EBI-12820543">
        <id>O75508</id>
        <label>CLDN11</label>
    </interactant>
    <organismsDiffer>false</organismsDiffer>
    <experiments>3</experiments>
</comment>
<comment type="interaction">
    <interactant intactId="EBI-11742770">
        <id>Q96HE8</id>
    </interactant>
    <interactant intactId="EBI-12256978">
        <id>Q8N6F1-2</id>
        <label>CLDN19</label>
    </interactant>
    <organismsDiffer>false</organismsDiffer>
    <experiments>3</experiments>
</comment>
<comment type="interaction">
    <interactant intactId="EBI-11742770">
        <id>Q96HE8</id>
    </interactant>
    <interactant intactId="EBI-10215641">
        <id>P56748</id>
        <label>CLDN8</label>
    </interactant>
    <organismsDiffer>false</organismsDiffer>
    <experiments>3</experiments>
</comment>
<comment type="interaction">
    <interactant intactId="EBI-11742770">
        <id>Q96HE8</id>
    </interactant>
    <interactant intactId="EBI-11959453">
        <id>Q8NHS1</id>
        <label>CLDND2</label>
    </interactant>
    <organismsDiffer>false</organismsDiffer>
    <experiments>3</experiments>
</comment>
<comment type="interaction">
    <interactant intactId="EBI-11742770">
        <id>Q96HE8</id>
    </interactant>
    <interactant intactId="EBI-11749983">
        <id>Q9UHP7-3</id>
        <label>CLEC2D</label>
    </interactant>
    <organismsDiffer>false</organismsDiffer>
    <experiments>3</experiments>
</comment>
<comment type="interaction">
    <interactant intactId="EBI-11742770">
        <id>Q96HE8</id>
    </interactant>
    <interactant intactId="EBI-11522780">
        <id>Q96DZ9-2</id>
        <label>CMTM5</label>
    </interactant>
    <organismsDiffer>false</organismsDiffer>
    <experiments>3</experiments>
</comment>
<comment type="interaction">
    <interactant intactId="EBI-11742770">
        <id>Q96HE8</id>
    </interactant>
    <interactant intactId="EBI-12208021">
        <id>Q8TBE1</id>
        <label>CNIH3</label>
    </interactant>
    <organismsDiffer>false</organismsDiffer>
    <experiments>3</experiments>
</comment>
<comment type="interaction">
    <interactant intactId="EBI-11742770">
        <id>Q96HE8</id>
    </interactant>
    <interactant intactId="EBI-12211159">
        <id>P29400-2</id>
        <label>COL4A5</label>
    </interactant>
    <organismsDiffer>false</organismsDiffer>
    <experiments>3</experiments>
</comment>
<comment type="interaction">
    <interactant intactId="EBI-11742770">
        <id>Q96HE8</id>
    </interactant>
    <interactant intactId="EBI-2835281">
        <id>P25025</id>
        <label>CXCR2</label>
    </interactant>
    <organismsDiffer>false</organismsDiffer>
    <experiments>3</experiments>
</comment>
<comment type="interaction">
    <interactant intactId="EBI-11742770">
        <id>Q96HE8</id>
    </interactant>
    <interactant intactId="EBI-2680384">
        <id>Q9BQA9</id>
        <label>CYBC1</label>
    </interactant>
    <organismsDiffer>false</organismsDiffer>
    <experiments>3</experiments>
</comment>
<comment type="interaction">
    <interactant intactId="EBI-11742770">
        <id>Q96HE8</id>
    </interactant>
    <interactant intactId="EBI-8645574">
        <id>Q9UPQ8</id>
        <label>DOLK</label>
    </interactant>
    <organismsDiffer>false</organismsDiffer>
    <experiments>3</experiments>
</comment>
<comment type="interaction">
    <interactant intactId="EBI-11742770">
        <id>Q96HE8</id>
    </interactant>
    <interactant intactId="EBI-489887">
        <id>P50402</id>
        <label>EMD</label>
    </interactant>
    <organismsDiffer>false</organismsDiffer>
    <experiments>3</experiments>
</comment>
<comment type="interaction">
    <interactant intactId="EBI-11742770">
        <id>Q96HE8</id>
    </interactant>
    <interactant intactId="EBI-10976398">
        <id>Q7Z2K6</id>
        <label>ERMP1</label>
    </interactant>
    <organismsDiffer>false</organismsDiffer>
    <experiments>3</experiments>
</comment>
<comment type="interaction">
    <interactant intactId="EBI-11742770">
        <id>Q96HE8</id>
    </interactant>
    <interactant intactId="EBI-11090967">
        <id>O75063</id>
        <label>FAM20B</label>
    </interactant>
    <organismsDiffer>false</organismsDiffer>
    <experiments>3</experiments>
</comment>
<comment type="interaction">
    <interactant intactId="EBI-11742770">
        <id>Q96HE8</id>
    </interactant>
    <interactant intactId="EBI-2876774">
        <id>Q92520</id>
        <label>FAM3C</label>
    </interactant>
    <organismsDiffer>false</organismsDiffer>
    <experiments>3</experiments>
</comment>
<comment type="interaction">
    <interactant intactId="EBI-11742770">
        <id>Q96HE8</id>
    </interactant>
    <interactant intactId="EBI-724839">
        <id>Q14318</id>
        <label>FKBP8</label>
    </interactant>
    <organismsDiffer>false</organismsDiffer>
    <experiments>3</experiments>
</comment>
<comment type="interaction">
    <interactant intactId="EBI-11742770">
        <id>Q96HE8</id>
    </interactant>
    <interactant intactId="EBI-12175685">
        <id>Q14802-3</id>
        <label>FXYD3</label>
    </interactant>
    <organismsDiffer>false</organismsDiffer>
    <experiments>3</experiments>
</comment>
<comment type="interaction">
    <interactant intactId="EBI-11742770">
        <id>Q96HE8</id>
    </interactant>
    <interactant intactId="EBI-2927498">
        <id>O60883</id>
        <label>GPR37L1</label>
    </interactant>
    <organismsDiffer>false</organismsDiffer>
    <experiments>3</experiments>
</comment>
<comment type="interaction">
    <interactant intactId="EBI-11742770">
        <id>Q96HE8</id>
    </interactant>
    <interactant intactId="EBI-725665">
        <id>Q9Y5U9</id>
        <label>IER3IP1</label>
    </interactant>
    <organismsDiffer>false</organismsDiffer>
    <experiments>3</experiments>
</comment>
<comment type="interaction">
    <interactant intactId="EBI-11742770">
        <id>Q96HE8</id>
    </interactant>
    <interactant intactId="EBI-8070286">
        <id>O43561-2</id>
        <label>LAT</label>
    </interactant>
    <organismsDiffer>false</organismsDiffer>
    <experiments>3</experiments>
</comment>
<comment type="interaction">
    <interactant intactId="EBI-11742770">
        <id>Q96HE8</id>
    </interactant>
    <interactant intactId="EBI-10200825">
        <id>Q8N8F7</id>
        <label>LSMEM1</label>
    </interactant>
    <organismsDiffer>false</organismsDiffer>
    <experiments>3</experiments>
</comment>
<comment type="interaction">
    <interactant intactId="EBI-11742770">
        <id>Q96HE8</id>
    </interactant>
    <interactant intactId="EBI-750078">
        <id>Q13021</id>
        <label>MALL</label>
    </interactant>
    <organismsDiffer>false</organismsDiffer>
    <experiments>3</experiments>
</comment>
<comment type="interaction">
    <interactant intactId="EBI-11742770">
        <id>Q96HE8</id>
    </interactant>
    <interactant intactId="EBI-9537218">
        <id>Q96G30</id>
        <label>MRAP2</label>
    </interactant>
    <organismsDiffer>false</organismsDiffer>
    <experiments>3</experiments>
</comment>
<comment type="interaction">
    <interactant intactId="EBI-11742770">
        <id>Q96HE8</id>
    </interactant>
    <interactant intactId="EBI-3919611">
        <id>Q16617</id>
        <label>NKG7</label>
    </interactant>
    <organismsDiffer>false</organismsDiffer>
    <experiments>3</experiments>
</comment>
<comment type="interaction">
    <interactant intactId="EBI-11742770">
        <id>Q96HE8</id>
    </interactant>
    <interactant intactId="EBI-12051377">
        <id>Q8N912</id>
        <label>NRAC</label>
    </interactant>
    <organismsDiffer>false</organismsDiffer>
    <experiments>3</experiments>
</comment>
<comment type="interaction">
    <interactant intactId="EBI-11742770">
        <id>Q96HE8</id>
    </interactant>
    <interactant intactId="EBI-2845982">
        <id>Q01453</id>
        <label>PMP22</label>
    </interactant>
    <organismsDiffer>false</organismsDiffer>
    <experiments>3</experiments>
</comment>
<comment type="interaction">
    <interactant intactId="EBI-11742770">
        <id>Q96HE8</id>
    </interactant>
    <interactant intactId="EBI-10173935">
        <id>A5D903</id>
        <label>PRB1</label>
    </interactant>
    <organismsDiffer>false</organismsDiffer>
    <experiments>3</experiments>
</comment>
<comment type="interaction">
    <interactant intactId="EBI-11742770">
        <id>Q96HE8</id>
    </interactant>
    <interactant intactId="EBI-742898">
        <id>P43378</id>
        <label>PTPN9</label>
    </interactant>
    <organismsDiffer>false</organismsDiffer>
    <experiments>3</experiments>
</comment>
<comment type="interaction">
    <interactant intactId="EBI-11742770">
        <id>Q96HE8</id>
    </interactant>
    <interactant intactId="EBI-10200782">
        <id>Q16849-3</id>
        <label>PTPRN</label>
    </interactant>
    <organismsDiffer>false</organismsDiffer>
    <experiments>3</experiments>
</comment>
<comment type="interaction">
    <interactant intactId="EBI-11742770">
        <id>Q96HE8</id>
    </interactant>
    <interactant intactId="EBI-1052363">
        <id>Q9NS64</id>
        <label>RPRM</label>
    </interactant>
    <organismsDiffer>false</organismsDiffer>
    <experiments>3</experiments>
</comment>
<comment type="interaction">
    <interactant intactId="EBI-11742770">
        <id>Q96HE8</id>
    </interactant>
    <interactant intactId="EBI-749270">
        <id>Q8N6R1</id>
        <label>SERP2</label>
    </interactant>
    <organismsDiffer>false</organismsDiffer>
    <experiments>3</experiments>
</comment>
<comment type="interaction">
    <interactant intactId="EBI-11742770">
        <id>Q96HE8</id>
    </interactant>
    <interactant intactId="EBI-10262251">
        <id>Q8IWU4</id>
        <label>SLC30A8</label>
    </interactant>
    <organismsDiffer>false</organismsDiffer>
    <experiments>3</experiments>
</comment>
<comment type="interaction">
    <interactant intactId="EBI-11742770">
        <id>Q96HE8</id>
    </interactant>
    <interactant intactId="EBI-3907610">
        <id>Q8N2U9</id>
        <label>SLC66A2</label>
    </interactant>
    <organismsDiffer>false</organismsDiffer>
    <experiments>3</experiments>
</comment>
<comment type="interaction">
    <interactant intactId="EBI-11742770">
        <id>Q96HE8</id>
    </interactant>
    <interactant intactId="EBI-10226799">
        <id>Q0VAQ4</id>
        <label>SMAGP</label>
    </interactant>
    <organismsDiffer>false</organismsDiffer>
    <experiments>3</experiments>
</comment>
<comment type="interaction">
    <interactant intactId="EBI-11742770">
        <id>Q96HE8</id>
    </interactant>
    <interactant intactId="EBI-8640191">
        <id>Q9NRQ5</id>
        <label>SMCO4</label>
    </interactant>
    <organismsDiffer>false</organismsDiffer>
    <experiments>3</experiments>
</comment>
<comment type="interaction">
    <interactant intactId="EBI-11742770">
        <id>Q96HE8</id>
    </interactant>
    <interactant intactId="EBI-738687">
        <id>P02808</id>
        <label>STATH</label>
    </interactant>
    <organismsDiffer>false</organismsDiffer>
    <experiments>3</experiments>
</comment>
<comment type="interaction">
    <interactant intactId="EBI-11742770">
        <id>Q96HE8</id>
    </interactant>
    <interactant intactId="EBI-3221827">
        <id>O15400</id>
        <label>STX7</label>
    </interactant>
    <organismsDiffer>false</organismsDiffer>
    <experiments>3</experiments>
</comment>
<comment type="interaction">
    <interactant intactId="EBI-11742770">
        <id>Q96HE8</id>
    </interactant>
    <interactant intactId="EBI-12187159">
        <id>O43759-2</id>
        <label>SYNGR1</label>
    </interactant>
    <organismsDiffer>false</organismsDiffer>
    <experiments>3</experiments>
</comment>
<comment type="interaction">
    <interactant intactId="EBI-11742770">
        <id>Q96HE8</id>
    </interactant>
    <interactant intactId="EBI-11337932">
        <id>Q96CP7</id>
        <label>TLCD1</label>
    </interactant>
    <organismsDiffer>false</organismsDiffer>
    <experiments>3</experiments>
</comment>
<comment type="interaction">
    <interactant intactId="EBI-11742770">
        <id>Q96HE8</id>
    </interactant>
    <interactant intactId="EBI-8644968">
        <id>Q9NV29</id>
        <label>TMEM100</label>
    </interactant>
    <organismsDiffer>false</organismsDiffer>
    <experiments>3</experiments>
</comment>
<comment type="interaction">
    <interactant intactId="EBI-11742770">
        <id>Q96HE8</id>
    </interactant>
    <interactant intactId="EBI-12845616">
        <id>Q6UX40</id>
        <label>TMEM107</label>
    </interactant>
    <organismsDiffer>false</organismsDiffer>
    <experiments>3</experiments>
</comment>
<comment type="interaction">
    <interactant intactId="EBI-11742770">
        <id>Q96HE8</id>
    </interactant>
    <interactant intactId="EBI-1057733">
        <id>Q9BVC6</id>
        <label>TMEM109</label>
    </interactant>
    <organismsDiffer>false</organismsDiffer>
    <experiments>3</experiments>
</comment>
<comment type="interaction">
    <interactant intactId="EBI-11742770">
        <id>Q96HE8</id>
    </interactant>
    <interactant intactId="EBI-10171534">
        <id>A0PK00</id>
        <label>TMEM120B</label>
    </interactant>
    <organismsDiffer>false</organismsDiffer>
    <experiments>3</experiments>
</comment>
<comment type="interaction">
    <interactant intactId="EBI-11742770">
        <id>Q96HE8</id>
    </interactant>
    <interactant intactId="EBI-10694905">
        <id>Q5BJH2-2</id>
        <label>TMEM128</label>
    </interactant>
    <organismsDiffer>false</organismsDiffer>
    <experiments>3</experiments>
</comment>
<comment type="interaction">
    <interactant intactId="EBI-11742770">
        <id>Q96HE8</id>
    </interactant>
    <interactant intactId="EBI-2800360">
        <id>Q9Y6G1</id>
        <label>TMEM14A</label>
    </interactant>
    <organismsDiffer>false</organismsDiffer>
    <experiments>3</experiments>
</comment>
<comment type="interaction">
    <interactant intactId="EBI-11742770">
        <id>Q96HE8</id>
    </interactant>
    <interactant intactId="EBI-12887458">
        <id>Q9BU79</id>
        <label>TMEM243</label>
    </interactant>
    <organismsDiffer>false</organismsDiffer>
    <experiments>3</experiments>
</comment>
<comment type="interaction">
    <interactant intactId="EBI-11742770">
        <id>Q96HE8</id>
    </interactant>
    <interactant intactId="EBI-6656213">
        <id>Q6PI78</id>
        <label>TMEM65</label>
    </interactant>
    <organismsDiffer>false</organismsDiffer>
    <experiments>3</experiments>
</comment>
<comment type="interaction">
    <interactant intactId="EBI-11742770">
        <id>Q96HE8</id>
    </interactant>
    <interactant intactId="EBI-717441">
        <id>O14798</id>
        <label>TNFRSF10C</label>
    </interactant>
    <organismsDiffer>false</organismsDiffer>
    <experiments>3</experiments>
</comment>
<comment type="interaction">
    <interactant intactId="EBI-11742770">
        <id>Q96HE8</id>
    </interactant>
    <interactant intactId="EBI-3914312">
        <id>O60635</id>
        <label>TSPAN1</label>
    </interactant>
    <organismsDiffer>false</organismsDiffer>
    <experiments>3</experiments>
</comment>
<comment type="interaction">
    <interactant intactId="EBI-11742770">
        <id>Q96HE8</id>
    </interactant>
    <interactant intactId="EBI-12195249">
        <id>Q5TGU0</id>
        <label>TSPO2</label>
    </interactant>
    <organismsDiffer>false</organismsDiffer>
    <experiments>3</experiments>
</comment>
<comment type="interaction">
    <interactant intactId="EBI-11742770">
        <id>Q96HE8</id>
    </interactant>
    <interactant intactId="EBI-10243654">
        <id>Q5BVD1</id>
        <label>TTMP</label>
    </interactant>
    <organismsDiffer>false</organismsDiffer>
    <experiments>3</experiments>
</comment>
<comment type="interaction">
    <interactant intactId="EBI-11742770">
        <id>Q96HE8</id>
    </interactant>
    <interactant intactId="EBI-11988865">
        <id>A5PKU2</id>
        <label>TUSC5</label>
    </interactant>
    <organismsDiffer>false</organismsDiffer>
    <experiments>6</experiments>
</comment>
<comment type="interaction">
    <interactant intactId="EBI-11742770">
        <id>Q96HE8</id>
    </interactant>
    <interactant intactId="EBI-11343401">
        <id>Q9NYZ1</id>
        <label>TVP23B</label>
    </interactant>
    <organismsDiffer>false</organismsDiffer>
    <experiments>3</experiments>
</comment>
<comment type="interaction">
    <interactant intactId="EBI-11742770">
        <id>Q96HE8</id>
    </interactant>
    <interactant intactId="EBI-11337915">
        <id>Q8N0U8</id>
        <label>VKORC1L1</label>
    </interactant>
    <organismsDiffer>false</organismsDiffer>
    <experiments>3</experiments>
</comment>
<comment type="subcellular location">
    <subcellularLocation>
        <location evidence="3">Membrane</location>
        <topology evidence="3">Multi-pass membrane protein</topology>
    </subcellularLocation>
    <subcellularLocation>
        <location evidence="1">Cell projection</location>
        <location evidence="1">Cilium</location>
    </subcellularLocation>
    <text evidence="1">Localizes at the transition zone, a region between the basal body and the ciliary axoneme.</text>
</comment>
<comment type="alternative products">
    <event type="alternative initiation"/>
    <isoform>
        <id>Q96HE8-1</id>
        <name>1</name>
        <sequence type="displayed"/>
    </isoform>
    <isoform>
        <id>Q96HE8-2</id>
        <name>2</name>
        <sequence type="described" ref="VSP_062209"/>
    </isoform>
</comment>
<comment type="sequence caution" evidence="3">
    <conflict type="erroneous termination">
        <sequence resource="EMBL-CDS" id="BAH13755"/>
    </conflict>
    <text>Extended C-terminus.</text>
</comment>
<comment type="sequence caution" evidence="3">
    <conflict type="miscellaneous discrepancy">
        <sequence resource="EMBL" id="CB962031"/>
    </conflict>
    <text>Sequence of unknown origin at the N-terminal part.</text>
</comment>
<comment type="sequence caution" evidence="3">
    <conflict type="erroneous gene model prediction">
        <sequence resource="EMBL-CDS" id="EAX02373"/>
    </conflict>
</comment>
<sequence>MAAPRRGRGSSTVLSSVPLQMLFYLSGTYYALYFLATLLMITYKSQVFSYPHRYLVLDLALLFLMGILEAVRLYLGTRGNLTEAERPLAASLALTAGTALLSAHFLLWQALVLWADWALSATLLALHGLEAVLQVVAIAAFTR</sequence>
<name>TMM80_HUMAN</name>
<organism>
    <name type="scientific">Homo sapiens</name>
    <name type="common">Human</name>
    <dbReference type="NCBI Taxonomy" id="9606"/>
    <lineage>
        <taxon>Eukaryota</taxon>
        <taxon>Metazoa</taxon>
        <taxon>Chordata</taxon>
        <taxon>Craniata</taxon>
        <taxon>Vertebrata</taxon>
        <taxon>Euteleostomi</taxon>
        <taxon>Mammalia</taxon>
        <taxon>Eutheria</taxon>
        <taxon>Euarchontoglires</taxon>
        <taxon>Primates</taxon>
        <taxon>Haplorrhini</taxon>
        <taxon>Catarrhini</taxon>
        <taxon>Hominidae</taxon>
        <taxon>Homo</taxon>
    </lineage>
</organism>
<reference key="1">
    <citation type="journal article" date="2009" name="DNA Res.">
        <title>Identification and functional analyses of 11,769 full-length human cDNAs focused on alternative splicing.</title>
        <authorList>
            <person name="Wakamatsu A."/>
            <person name="Kimura K."/>
            <person name="Yamamoto J."/>
            <person name="Nishikawa T."/>
            <person name="Nomura N."/>
            <person name="Sugano S."/>
            <person name="Isogai T."/>
        </authorList>
    </citation>
    <scope>NUCLEOTIDE SEQUENCE [LARGE SCALE MRNA] (ISOFORM 1)</scope>
</reference>
<reference key="2">
    <citation type="journal article" date="2006" name="Nature">
        <title>Human chromosome 11 DNA sequence and analysis including novel gene identification.</title>
        <authorList>
            <person name="Taylor T.D."/>
            <person name="Noguchi H."/>
            <person name="Totoki Y."/>
            <person name="Toyoda A."/>
            <person name="Kuroki Y."/>
            <person name="Dewar K."/>
            <person name="Lloyd C."/>
            <person name="Itoh T."/>
            <person name="Takeda T."/>
            <person name="Kim D.-W."/>
            <person name="She X."/>
            <person name="Barlow K.F."/>
            <person name="Bloom T."/>
            <person name="Bruford E."/>
            <person name="Chang J.L."/>
            <person name="Cuomo C.A."/>
            <person name="Eichler E."/>
            <person name="FitzGerald M.G."/>
            <person name="Jaffe D.B."/>
            <person name="LaButti K."/>
            <person name="Nicol R."/>
            <person name="Park H.-S."/>
            <person name="Seaman C."/>
            <person name="Sougnez C."/>
            <person name="Yang X."/>
            <person name="Zimmer A.R."/>
            <person name="Zody M.C."/>
            <person name="Birren B.W."/>
            <person name="Nusbaum C."/>
            <person name="Fujiyama A."/>
            <person name="Hattori M."/>
            <person name="Rogers J."/>
            <person name="Lander E.S."/>
            <person name="Sakaki Y."/>
        </authorList>
    </citation>
    <scope>NUCLEOTIDE SEQUENCE [LARGE SCALE GENOMIC DNA]</scope>
</reference>
<reference key="3">
    <citation type="submission" date="2005-07" db="EMBL/GenBank/DDBJ databases">
        <authorList>
            <person name="Mural R.J."/>
            <person name="Istrail S."/>
            <person name="Sutton G.G."/>
            <person name="Florea L."/>
            <person name="Halpern A.L."/>
            <person name="Mobarry C.M."/>
            <person name="Lippert R."/>
            <person name="Walenz B."/>
            <person name="Shatkay H."/>
            <person name="Dew I."/>
            <person name="Miller J.R."/>
            <person name="Flanigan M.J."/>
            <person name="Edwards N.J."/>
            <person name="Bolanos R."/>
            <person name="Fasulo D."/>
            <person name="Halldorsson B.V."/>
            <person name="Hannenhalli S."/>
            <person name="Turner R."/>
            <person name="Yooseph S."/>
            <person name="Lu F."/>
            <person name="Nusskern D.R."/>
            <person name="Shue B.C."/>
            <person name="Zheng X.H."/>
            <person name="Zhong F."/>
            <person name="Delcher A.L."/>
            <person name="Huson D.H."/>
            <person name="Kravitz S.A."/>
            <person name="Mouchard L."/>
            <person name="Reinert K."/>
            <person name="Remington K.A."/>
            <person name="Clark A.G."/>
            <person name="Waterman M.S."/>
            <person name="Eichler E.E."/>
            <person name="Adams M.D."/>
            <person name="Hunkapiller M.W."/>
            <person name="Myers E.W."/>
            <person name="Venter J.C."/>
        </authorList>
    </citation>
    <scope>NUCLEOTIDE SEQUENCE [LARGE SCALE GENOMIC DNA] OF 21-143</scope>
</reference>
<reference key="4">
    <citation type="journal article" date="2004" name="Genome Res.">
        <title>The status, quality, and expansion of the NIH full-length cDNA project: the Mammalian Gene Collection (MGC).</title>
        <authorList>
            <consortium name="The MGC Project Team"/>
        </authorList>
    </citation>
    <scope>NUCLEOTIDE SEQUENCE [LARGE SCALE MRNA] (ISOFORMS 1 AND 2)</scope>
    <source>
        <tissue>Colon</tissue>
        <tissue>Placenta</tissue>
    </source>
</reference>
<dbReference type="EMBL" id="AK302585">
    <property type="protein sequence ID" value="BAH13755.1"/>
    <property type="status" value="ALT_TERM"/>
    <property type="molecule type" value="mRNA"/>
</dbReference>
<dbReference type="EMBL" id="AC131934">
    <property type="status" value="NOT_ANNOTATED_CDS"/>
    <property type="molecule type" value="Genomic_DNA"/>
</dbReference>
<dbReference type="EMBL" id="CH471158">
    <property type="protein sequence ID" value="EAX02373.1"/>
    <property type="status" value="ALT_SEQ"/>
    <property type="molecule type" value="Genomic_DNA"/>
</dbReference>
<dbReference type="EMBL" id="BC008671">
    <property type="protein sequence ID" value="AAH08671.2"/>
    <property type="molecule type" value="mRNA"/>
</dbReference>
<dbReference type="EMBL" id="CB962031">
    <property type="status" value="NOT_ANNOTATED_CDS"/>
    <property type="molecule type" value="mRNA"/>
</dbReference>
<dbReference type="CCDS" id="CCDS41587.3">
    <molecule id="Q96HE8-1"/>
</dbReference>
<dbReference type="RefSeq" id="NP_001035928.3">
    <molecule id="Q96HE8-1"/>
    <property type="nucleotide sequence ID" value="NM_001042463.3"/>
</dbReference>
<dbReference type="RefSeq" id="NP_001263182.1">
    <property type="nucleotide sequence ID" value="NM_001276253.1"/>
</dbReference>
<dbReference type="RefSeq" id="NP_001263203.1">
    <property type="nucleotide sequence ID" value="NM_001276274.1"/>
</dbReference>
<dbReference type="RefSeq" id="NP_777600.3">
    <property type="nucleotide sequence ID" value="NM_174940.3"/>
</dbReference>
<dbReference type="BioGRID" id="129504">
    <property type="interactions" value="67"/>
</dbReference>
<dbReference type="FunCoup" id="Q96HE8">
    <property type="interactions" value="58"/>
</dbReference>
<dbReference type="IntAct" id="Q96HE8">
    <property type="interactions" value="66"/>
</dbReference>
<dbReference type="MINT" id="Q96HE8"/>
<dbReference type="STRING" id="9606.ENSP00000380646"/>
<dbReference type="PhosphoSitePlus" id="Q96HE8"/>
<dbReference type="BioMuta" id="TMEM80"/>
<dbReference type="DMDM" id="209572717"/>
<dbReference type="MassIVE" id="Q96HE8"/>
<dbReference type="PaxDb" id="9606-ENSP00000380646"/>
<dbReference type="PeptideAtlas" id="Q96HE8"/>
<dbReference type="Antibodypedia" id="59030">
    <property type="antibodies" value="127 antibodies from 14 providers"/>
</dbReference>
<dbReference type="DNASU" id="283232"/>
<dbReference type="Ensembl" id="ENST00000397510.9">
    <molecule id="Q96HE8-1"/>
    <property type="protein sequence ID" value="ENSP00000380646.4"/>
    <property type="gene ID" value="ENSG00000177042.16"/>
</dbReference>
<dbReference type="GeneID" id="283232"/>
<dbReference type="KEGG" id="hsa:283232"/>
<dbReference type="MANE-Select" id="ENST00000397510.9">
    <property type="protein sequence ID" value="ENSP00000380646.4"/>
    <property type="RefSeq nucleotide sequence ID" value="NM_001042463.3"/>
    <property type="RefSeq protein sequence ID" value="NP_001035928.3"/>
</dbReference>
<dbReference type="UCSC" id="uc057xju.1">
    <molecule id="Q96HE8-1"/>
    <property type="organism name" value="human"/>
</dbReference>
<dbReference type="AGR" id="HGNC:27453"/>
<dbReference type="CTD" id="283232"/>
<dbReference type="GeneCards" id="TMEM80"/>
<dbReference type="HGNC" id="HGNC:27453">
    <property type="gene designation" value="TMEM80"/>
</dbReference>
<dbReference type="HPA" id="ENSG00000177042">
    <property type="expression patterns" value="Low tissue specificity"/>
</dbReference>
<dbReference type="MIM" id="620248">
    <property type="type" value="gene"/>
</dbReference>
<dbReference type="neXtProt" id="NX_Q96HE8"/>
<dbReference type="OpenTargets" id="ENSG00000177042"/>
<dbReference type="PharmGKB" id="PA142670734"/>
<dbReference type="VEuPathDB" id="HostDB:ENSG00000177042"/>
<dbReference type="eggNOG" id="KOG4502">
    <property type="taxonomic scope" value="Eukaryota"/>
</dbReference>
<dbReference type="GeneTree" id="ENSGT00940000153899"/>
<dbReference type="HOGENOM" id="CLU_1320498_0_0_1"/>
<dbReference type="InParanoid" id="Q96HE8"/>
<dbReference type="OrthoDB" id="262535at2759"/>
<dbReference type="PAN-GO" id="Q96HE8">
    <property type="GO annotations" value="2 GO annotations based on evolutionary models"/>
</dbReference>
<dbReference type="PhylomeDB" id="Q96HE8"/>
<dbReference type="TreeFam" id="TF323824"/>
<dbReference type="PathwayCommons" id="Q96HE8"/>
<dbReference type="SignaLink" id="Q96HE8"/>
<dbReference type="BioGRID-ORCS" id="283232">
    <property type="hits" value="6 hits in 1048 CRISPR screens"/>
</dbReference>
<dbReference type="ChiTaRS" id="TMEM80">
    <property type="organism name" value="human"/>
</dbReference>
<dbReference type="GenomeRNAi" id="283232"/>
<dbReference type="Pharos" id="Q96HE8">
    <property type="development level" value="Tdark"/>
</dbReference>
<dbReference type="PRO" id="PR:Q96HE8"/>
<dbReference type="Proteomes" id="UP000005640">
    <property type="component" value="Chromosome 11"/>
</dbReference>
<dbReference type="RNAct" id="Q96HE8">
    <property type="molecule type" value="protein"/>
</dbReference>
<dbReference type="Bgee" id="ENSG00000177042">
    <property type="expression patterns" value="Expressed in pancreatic ductal cell and 193 other cell types or tissues"/>
</dbReference>
<dbReference type="ExpressionAtlas" id="Q96HE8">
    <property type="expression patterns" value="baseline and differential"/>
</dbReference>
<dbReference type="GO" id="GO:0035869">
    <property type="term" value="C:ciliary transition zone"/>
    <property type="evidence" value="ECO:0000318"/>
    <property type="project" value="GO_Central"/>
</dbReference>
<dbReference type="GO" id="GO:0016020">
    <property type="term" value="C:membrane"/>
    <property type="evidence" value="ECO:0007669"/>
    <property type="project" value="UniProtKB-SubCell"/>
</dbReference>
<dbReference type="GO" id="GO:1905515">
    <property type="term" value="P:non-motile cilium assembly"/>
    <property type="evidence" value="ECO:0000318"/>
    <property type="project" value="GO_Central"/>
</dbReference>
<dbReference type="InterPro" id="IPR019184">
    <property type="entry name" value="Uncharacterised_TM-17"/>
</dbReference>
<dbReference type="PANTHER" id="PTHR13531">
    <property type="entry name" value="GEO07735P1-RELATED-RELATED"/>
    <property type="match status" value="1"/>
</dbReference>
<dbReference type="PANTHER" id="PTHR13531:SF8">
    <property type="entry name" value="TRANSMEMBRANE PROTEIN 80"/>
    <property type="match status" value="1"/>
</dbReference>
<dbReference type="Pfam" id="PF09799">
    <property type="entry name" value="Transmemb_17"/>
    <property type="match status" value="1"/>
</dbReference>
<feature type="chain" id="PRO_0000287873" description="Transmembrane protein 80">
    <location>
        <begin position="1"/>
        <end position="143"/>
    </location>
</feature>
<feature type="transmembrane region" description="Helical" evidence="2">
    <location>
        <begin position="21"/>
        <end position="41"/>
    </location>
</feature>
<feature type="transmembrane region" description="Helical" evidence="2">
    <location>
        <begin position="55"/>
        <end position="75"/>
    </location>
</feature>
<feature type="transmembrane region" description="Helical" evidence="2">
    <location>
        <begin position="99"/>
        <end position="119"/>
    </location>
</feature>
<feature type="transmembrane region" description="Helical" evidence="2">
    <location>
        <begin position="121"/>
        <end position="141"/>
    </location>
</feature>
<feature type="splice variant" id="VSP_062209" description="In isoform 2.">
    <original>MAAPRR</original>
    <variation>MAEGARARGPRGCRDRDGPAGGA</variation>
    <location>
        <begin position="1"/>
        <end position="6"/>
    </location>
</feature>
<evidence type="ECO:0000250" key="1">
    <source>
        <dbReference type="UniProtKB" id="Q9D3H0"/>
    </source>
</evidence>
<evidence type="ECO:0000255" key="2"/>
<evidence type="ECO:0000305" key="3"/>
<evidence type="ECO:0000312" key="4">
    <source>
        <dbReference type="HGNC" id="HGNC:27453"/>
    </source>
</evidence>
<gene>
    <name evidence="4" type="primary">TMEM80</name>
</gene>
<proteinExistence type="evidence at protein level"/>
<accession>Q96HE8</accession>
<accession>A0A0A0MS80</accession>
<accession>A8MQ01</accession>
<accession>A8MXY8</accession>
<accession>B7WNU5</accession>
<accession>B7Z7W9</accession>